<organism>
    <name type="scientific">Streptococcus pyogenes serotype M2 (strain MGAS10270)</name>
    <dbReference type="NCBI Taxonomy" id="370552"/>
    <lineage>
        <taxon>Bacteria</taxon>
        <taxon>Bacillati</taxon>
        <taxon>Bacillota</taxon>
        <taxon>Bacilli</taxon>
        <taxon>Lactobacillales</taxon>
        <taxon>Streptococcaceae</taxon>
        <taxon>Streptococcus</taxon>
    </lineage>
</organism>
<evidence type="ECO:0000255" key="1">
    <source>
        <dbReference type="HAMAP-Rule" id="MF_01726"/>
    </source>
</evidence>
<protein>
    <recommendedName>
        <fullName evidence="1">Spermidine/putrescine import ATP-binding protein PotA</fullName>
        <ecNumber evidence="1">7.6.2.11</ecNumber>
    </recommendedName>
</protein>
<keyword id="KW-0067">ATP-binding</keyword>
<keyword id="KW-1003">Cell membrane</keyword>
<keyword id="KW-0472">Membrane</keyword>
<keyword id="KW-0547">Nucleotide-binding</keyword>
<keyword id="KW-1278">Translocase</keyword>
<keyword id="KW-0813">Transport</keyword>
<reference key="1">
    <citation type="journal article" date="2006" name="Proc. Natl. Acad. Sci. U.S.A.">
        <title>Molecular genetic anatomy of inter- and intraserotype variation in the human bacterial pathogen group A Streptococcus.</title>
        <authorList>
            <person name="Beres S.B."/>
            <person name="Richter E.W."/>
            <person name="Nagiec M.J."/>
            <person name="Sumby P."/>
            <person name="Porcella S.F."/>
            <person name="DeLeo F.R."/>
            <person name="Musser J.M."/>
        </authorList>
    </citation>
    <scope>NUCLEOTIDE SEQUENCE [LARGE SCALE GENOMIC DNA]</scope>
    <source>
        <strain>MGAS10270</strain>
    </source>
</reference>
<accession>Q1JGY7</accession>
<proteinExistence type="inferred from homology"/>
<feature type="chain" id="PRO_0000286309" description="Spermidine/putrescine import ATP-binding protein PotA">
    <location>
        <begin position="1"/>
        <end position="384"/>
    </location>
</feature>
<feature type="domain" description="ABC transporter" evidence="1">
    <location>
        <begin position="6"/>
        <end position="238"/>
    </location>
</feature>
<feature type="binding site" evidence="1">
    <location>
        <begin position="40"/>
        <end position="47"/>
    </location>
    <ligand>
        <name>ATP</name>
        <dbReference type="ChEBI" id="CHEBI:30616"/>
    </ligand>
</feature>
<comment type="function">
    <text evidence="1">Part of the ABC transporter complex PotABCD involved in spermidine/putrescine import. Responsible for energy coupling to the transport system.</text>
</comment>
<comment type="catalytic activity">
    <reaction evidence="1">
        <text>ATP + H2O + polyamine-[polyamine-binding protein]Side 1 = ADP + phosphate + polyamineSide 2 + [polyamine-binding protein]Side 1.</text>
        <dbReference type="EC" id="7.6.2.11"/>
    </reaction>
</comment>
<comment type="subunit">
    <text evidence="1">The complex is composed of two ATP-binding proteins (PotA), two transmembrane proteins (PotB and PotC) and a solute-binding protein (PotD).</text>
</comment>
<comment type="subcellular location">
    <subcellularLocation>
        <location evidence="1">Cell membrane</location>
        <topology evidence="1">Peripheral membrane protein</topology>
    </subcellularLocation>
</comment>
<comment type="similarity">
    <text evidence="1">Belongs to the ABC transporter superfamily. Spermidine/putrescine importer (TC 3.A.1.11.1) family.</text>
</comment>
<gene>
    <name evidence="1" type="primary">potA</name>
    <name type="ordered locus">MGAS10270_Spy0942</name>
</gene>
<dbReference type="EC" id="7.6.2.11" evidence="1"/>
<dbReference type="EMBL" id="CP000260">
    <property type="protein sequence ID" value="ABF34007.1"/>
    <property type="molecule type" value="Genomic_DNA"/>
</dbReference>
<dbReference type="SMR" id="Q1JGY7"/>
<dbReference type="KEGG" id="sph:MGAS10270_Spy0942"/>
<dbReference type="HOGENOM" id="CLU_000604_1_1_9"/>
<dbReference type="Proteomes" id="UP000002436">
    <property type="component" value="Chromosome"/>
</dbReference>
<dbReference type="GO" id="GO:0043190">
    <property type="term" value="C:ATP-binding cassette (ABC) transporter complex"/>
    <property type="evidence" value="ECO:0007669"/>
    <property type="project" value="InterPro"/>
</dbReference>
<dbReference type="GO" id="GO:0015417">
    <property type="term" value="F:ABC-type polyamine transporter activity"/>
    <property type="evidence" value="ECO:0007669"/>
    <property type="project" value="UniProtKB-EC"/>
</dbReference>
<dbReference type="GO" id="GO:0005524">
    <property type="term" value="F:ATP binding"/>
    <property type="evidence" value="ECO:0007669"/>
    <property type="project" value="UniProtKB-KW"/>
</dbReference>
<dbReference type="GO" id="GO:0016887">
    <property type="term" value="F:ATP hydrolysis activity"/>
    <property type="evidence" value="ECO:0007669"/>
    <property type="project" value="InterPro"/>
</dbReference>
<dbReference type="FunFam" id="3.40.50.300:FF:000042">
    <property type="entry name" value="Maltose/maltodextrin ABC transporter, ATP-binding protein"/>
    <property type="match status" value="1"/>
</dbReference>
<dbReference type="Gene3D" id="2.40.50.100">
    <property type="match status" value="1"/>
</dbReference>
<dbReference type="Gene3D" id="3.40.50.300">
    <property type="entry name" value="P-loop containing nucleotide triphosphate hydrolases"/>
    <property type="match status" value="1"/>
</dbReference>
<dbReference type="InterPro" id="IPR003593">
    <property type="entry name" value="AAA+_ATPase"/>
</dbReference>
<dbReference type="InterPro" id="IPR050093">
    <property type="entry name" value="ABC_SmlMolc_Importer"/>
</dbReference>
<dbReference type="InterPro" id="IPR003439">
    <property type="entry name" value="ABC_transporter-like_ATP-bd"/>
</dbReference>
<dbReference type="InterPro" id="IPR017871">
    <property type="entry name" value="ABC_transporter-like_CS"/>
</dbReference>
<dbReference type="InterPro" id="IPR008995">
    <property type="entry name" value="Mo/tungstate-bd_C_term_dom"/>
</dbReference>
<dbReference type="InterPro" id="IPR027417">
    <property type="entry name" value="P-loop_NTPase"/>
</dbReference>
<dbReference type="InterPro" id="IPR005893">
    <property type="entry name" value="PotA-like"/>
</dbReference>
<dbReference type="InterPro" id="IPR013611">
    <property type="entry name" value="Transp-assoc_OB_typ2"/>
</dbReference>
<dbReference type="NCBIfam" id="TIGR01187">
    <property type="entry name" value="potA"/>
    <property type="match status" value="1"/>
</dbReference>
<dbReference type="PANTHER" id="PTHR42781">
    <property type="entry name" value="SPERMIDINE/PUTRESCINE IMPORT ATP-BINDING PROTEIN POTA"/>
    <property type="match status" value="1"/>
</dbReference>
<dbReference type="PANTHER" id="PTHR42781:SF4">
    <property type="entry name" value="SPERMIDINE_PUTRESCINE IMPORT ATP-BINDING PROTEIN POTA"/>
    <property type="match status" value="1"/>
</dbReference>
<dbReference type="Pfam" id="PF00005">
    <property type="entry name" value="ABC_tran"/>
    <property type="match status" value="1"/>
</dbReference>
<dbReference type="Pfam" id="PF08402">
    <property type="entry name" value="TOBE_2"/>
    <property type="match status" value="1"/>
</dbReference>
<dbReference type="SMART" id="SM00382">
    <property type="entry name" value="AAA"/>
    <property type="match status" value="1"/>
</dbReference>
<dbReference type="SUPFAM" id="SSF50331">
    <property type="entry name" value="MOP-like"/>
    <property type="match status" value="1"/>
</dbReference>
<dbReference type="SUPFAM" id="SSF52540">
    <property type="entry name" value="P-loop containing nucleoside triphosphate hydrolases"/>
    <property type="match status" value="1"/>
</dbReference>
<dbReference type="PROSITE" id="PS00211">
    <property type="entry name" value="ABC_TRANSPORTER_1"/>
    <property type="match status" value="1"/>
</dbReference>
<dbReference type="PROSITE" id="PS50893">
    <property type="entry name" value="ABC_TRANSPORTER_2"/>
    <property type="match status" value="1"/>
</dbReference>
<dbReference type="PROSITE" id="PS51305">
    <property type="entry name" value="POTA"/>
    <property type="match status" value="1"/>
</dbReference>
<sequence length="384" mass="43838">MTKPIITFNNVSKTFEDSGTQVLKNINFDLEEGKFYTLLGASGSGKSTILNIMAGLLDASSGDIYLDGERINDLPINKRDIHTVFQNYALFPHMTVFENVAFALKLKKVDKKEIAKRVKETLKMVQLEGYENRSIQKLSGGQRQRVAIARAIINQPRVVLLDEPLSALDLKLRTEMQYELRELQQRLGITFVFVTHDQEEALAMSDWIFVMNEGEIVQSGTPVDIYDEPINHFVANFIGESNIINGTMIEDYLVSFNGKEFESVDGGMRPNEPVEVVIRPEDLQITLPEEGKLQVKVDTQLFRGVHYEIIAYDELGNEWMIHSTRKAIEGEVIGLDFTPEDLHIMRLNETEEEFDARIEEYVEMDEPEDGLINAIEEERNEENL</sequence>
<name>POTA_STRPD</name>